<name>RL22_FERNB</name>
<sequence length="147" mass="16798">MQTIIKREGLKRSKFHAKRKETLATLPKYEARAVARFVRISPRKARSVINSIRGKNVSEAFNLLEFSSKKAARIVYNVLKSAVANATNNLGLSEENLYVAACYVNDGPRMKRVWPRGRGRADIIQKRMSHITVIVRDREKENETKAK</sequence>
<feature type="chain" id="PRO_0000354470" description="Large ribosomal subunit protein uL22">
    <location>
        <begin position="1"/>
        <end position="147"/>
    </location>
</feature>
<proteinExistence type="inferred from homology"/>
<dbReference type="EMBL" id="CP000771">
    <property type="protein sequence ID" value="ABS60980.1"/>
    <property type="molecule type" value="Genomic_DNA"/>
</dbReference>
<dbReference type="RefSeq" id="WP_011994293.1">
    <property type="nucleotide sequence ID" value="NC_009718.1"/>
</dbReference>
<dbReference type="SMR" id="A7HM47"/>
<dbReference type="STRING" id="381764.Fnod_1133"/>
<dbReference type="KEGG" id="fno:Fnod_1133"/>
<dbReference type="eggNOG" id="COG0091">
    <property type="taxonomic scope" value="Bacteria"/>
</dbReference>
<dbReference type="HOGENOM" id="CLU_083987_3_1_0"/>
<dbReference type="OrthoDB" id="9805969at2"/>
<dbReference type="Proteomes" id="UP000002415">
    <property type="component" value="Chromosome"/>
</dbReference>
<dbReference type="GO" id="GO:0022625">
    <property type="term" value="C:cytosolic large ribosomal subunit"/>
    <property type="evidence" value="ECO:0007669"/>
    <property type="project" value="TreeGrafter"/>
</dbReference>
<dbReference type="GO" id="GO:0019843">
    <property type="term" value="F:rRNA binding"/>
    <property type="evidence" value="ECO:0007669"/>
    <property type="project" value="UniProtKB-UniRule"/>
</dbReference>
<dbReference type="GO" id="GO:0003735">
    <property type="term" value="F:structural constituent of ribosome"/>
    <property type="evidence" value="ECO:0007669"/>
    <property type="project" value="InterPro"/>
</dbReference>
<dbReference type="GO" id="GO:0006412">
    <property type="term" value="P:translation"/>
    <property type="evidence" value="ECO:0007669"/>
    <property type="project" value="UniProtKB-UniRule"/>
</dbReference>
<dbReference type="CDD" id="cd00336">
    <property type="entry name" value="Ribosomal_L22"/>
    <property type="match status" value="1"/>
</dbReference>
<dbReference type="Gene3D" id="3.90.470.10">
    <property type="entry name" value="Ribosomal protein L22/L17"/>
    <property type="match status" value="1"/>
</dbReference>
<dbReference type="HAMAP" id="MF_01331_B">
    <property type="entry name" value="Ribosomal_uL22_B"/>
    <property type="match status" value="1"/>
</dbReference>
<dbReference type="InterPro" id="IPR001063">
    <property type="entry name" value="Ribosomal_uL22"/>
</dbReference>
<dbReference type="InterPro" id="IPR005727">
    <property type="entry name" value="Ribosomal_uL22_bac/chlpt-type"/>
</dbReference>
<dbReference type="InterPro" id="IPR047867">
    <property type="entry name" value="Ribosomal_uL22_bac/org-type"/>
</dbReference>
<dbReference type="InterPro" id="IPR018260">
    <property type="entry name" value="Ribosomal_uL22_CS"/>
</dbReference>
<dbReference type="InterPro" id="IPR036394">
    <property type="entry name" value="Ribosomal_uL22_sf"/>
</dbReference>
<dbReference type="NCBIfam" id="TIGR01044">
    <property type="entry name" value="rplV_bact"/>
    <property type="match status" value="1"/>
</dbReference>
<dbReference type="PANTHER" id="PTHR13501">
    <property type="entry name" value="CHLOROPLAST 50S RIBOSOMAL PROTEIN L22-RELATED"/>
    <property type="match status" value="1"/>
</dbReference>
<dbReference type="PANTHER" id="PTHR13501:SF8">
    <property type="entry name" value="LARGE RIBOSOMAL SUBUNIT PROTEIN UL22M"/>
    <property type="match status" value="1"/>
</dbReference>
<dbReference type="Pfam" id="PF00237">
    <property type="entry name" value="Ribosomal_L22"/>
    <property type="match status" value="1"/>
</dbReference>
<dbReference type="SUPFAM" id="SSF54843">
    <property type="entry name" value="Ribosomal protein L22"/>
    <property type="match status" value="1"/>
</dbReference>
<dbReference type="PROSITE" id="PS00464">
    <property type="entry name" value="RIBOSOMAL_L22"/>
    <property type="match status" value="1"/>
</dbReference>
<accession>A7HM47</accession>
<gene>
    <name evidence="1" type="primary">rplV</name>
    <name type="ordered locus">Fnod_1133</name>
</gene>
<reference key="1">
    <citation type="submission" date="2007-07" db="EMBL/GenBank/DDBJ databases">
        <title>Complete sequence of Fervidobacterium nodosum Rt17-B1.</title>
        <authorList>
            <consortium name="US DOE Joint Genome Institute"/>
            <person name="Copeland A."/>
            <person name="Lucas S."/>
            <person name="Lapidus A."/>
            <person name="Barry K."/>
            <person name="Glavina del Rio T."/>
            <person name="Dalin E."/>
            <person name="Tice H."/>
            <person name="Pitluck S."/>
            <person name="Saunders E."/>
            <person name="Brettin T."/>
            <person name="Bruce D."/>
            <person name="Detter J.C."/>
            <person name="Han C."/>
            <person name="Schmutz J."/>
            <person name="Larimer F."/>
            <person name="Land M."/>
            <person name="Hauser L."/>
            <person name="Kyrpides N."/>
            <person name="Mikhailova N."/>
            <person name="Nelson K."/>
            <person name="Gogarten J.P."/>
            <person name="Noll K."/>
            <person name="Richardson P."/>
        </authorList>
    </citation>
    <scope>NUCLEOTIDE SEQUENCE [LARGE SCALE GENOMIC DNA]</scope>
    <source>
        <strain>ATCC 35602 / DSM 5306 / Rt17-B1</strain>
    </source>
</reference>
<protein>
    <recommendedName>
        <fullName evidence="1">Large ribosomal subunit protein uL22</fullName>
    </recommendedName>
    <alternativeName>
        <fullName evidence="2">50S ribosomal protein L22</fullName>
    </alternativeName>
</protein>
<keyword id="KW-1185">Reference proteome</keyword>
<keyword id="KW-0687">Ribonucleoprotein</keyword>
<keyword id="KW-0689">Ribosomal protein</keyword>
<keyword id="KW-0694">RNA-binding</keyword>
<keyword id="KW-0699">rRNA-binding</keyword>
<organism>
    <name type="scientific">Fervidobacterium nodosum (strain ATCC 35602 / DSM 5306 / Rt17-B1)</name>
    <dbReference type="NCBI Taxonomy" id="381764"/>
    <lineage>
        <taxon>Bacteria</taxon>
        <taxon>Thermotogati</taxon>
        <taxon>Thermotogota</taxon>
        <taxon>Thermotogae</taxon>
        <taxon>Thermotogales</taxon>
        <taxon>Fervidobacteriaceae</taxon>
        <taxon>Fervidobacterium</taxon>
    </lineage>
</organism>
<comment type="function">
    <text evidence="1">This protein binds specifically to 23S rRNA; its binding is stimulated by other ribosomal proteins, e.g. L4, L17, and L20. It is important during the early stages of 50S assembly. It makes multiple contacts with different domains of the 23S rRNA in the assembled 50S subunit and ribosome (By similarity).</text>
</comment>
<comment type="function">
    <text evidence="1">The globular domain of the protein is located near the polypeptide exit tunnel on the outside of the subunit, while an extended beta-hairpin is found that lines the wall of the exit tunnel in the center of the 70S ribosome.</text>
</comment>
<comment type="subunit">
    <text evidence="1">Part of the 50S ribosomal subunit.</text>
</comment>
<comment type="similarity">
    <text evidence="1">Belongs to the universal ribosomal protein uL22 family.</text>
</comment>
<evidence type="ECO:0000255" key="1">
    <source>
        <dbReference type="HAMAP-Rule" id="MF_01331"/>
    </source>
</evidence>
<evidence type="ECO:0000305" key="2"/>